<sequence>MSTAVINTDDDQLEPTLQSILDQKSLRWIFVGGKGGVGKTTTSCSLAIQLAKVRRSVLLISTDPAHNLSDAFSQKFGKEARLINGFENLSAMEIDPNGSIQELMGQAEEGEGPAAGMGGMMQDLAFAIPGIDEAMSFAEVLKQVKSLSYETIIFDTAPTGHTLRFLQFPTVLEKALAKVSQLSTQFGPMLNGLLGANGSLPNGQNLGEMMEKLEGLRETISEVNGQFKDENLTTFVCVCIPEFLSLYETERMIQELSSYHIDTHCIVVNQLLFPKKGSDCDQCNARRKMQKKYLEQIEELYDEFNVVKMPLLVEEVRGKERLEKFSEMLITPYVPPAGGL</sequence>
<comment type="function">
    <text evidence="1">ATPase required for the post-translational delivery of tail-anchored (TA) proteins to the endoplasmic reticulum. Recognizes and selectively binds the transmembrane domain of TA proteins in the cytosol. This complex then targets to the endoplasmic reticulum by membrane-bound receptors, where the tail-anchored protein is released for insertion. This process is regulated by ATP binding and hydrolysis. ATP binding drives the homodimer towards the closed dimer state, facilitating recognition of newly synthesized TA membrane proteins. ATP hydrolysis is required for insertion. Subsequently, the homodimer reverts towards the open dimer state, lowering its affinity for the membrane-bound receptor, and returning it to the cytosol to initiate a new round of targeting.</text>
</comment>
<comment type="subunit">
    <text evidence="1">Homodimer.</text>
</comment>
<comment type="subcellular location">
    <subcellularLocation>
        <location evidence="1">Cytoplasm</location>
    </subcellularLocation>
    <subcellularLocation>
        <location evidence="1">Endoplasmic reticulum</location>
    </subcellularLocation>
</comment>
<comment type="similarity">
    <text evidence="1">Belongs to the arsA ATPase family.</text>
</comment>
<keyword id="KW-0067">ATP-binding</keyword>
<keyword id="KW-0963">Cytoplasm</keyword>
<keyword id="KW-0256">Endoplasmic reticulum</keyword>
<keyword id="KW-0378">Hydrolase</keyword>
<keyword id="KW-0479">Metal-binding</keyword>
<keyword id="KW-0547">Nucleotide-binding</keyword>
<keyword id="KW-1185">Reference proteome</keyword>
<keyword id="KW-0813">Transport</keyword>
<keyword id="KW-0862">Zinc</keyword>
<evidence type="ECO:0000255" key="1">
    <source>
        <dbReference type="HAMAP-Rule" id="MF_03112"/>
    </source>
</evidence>
<proteinExistence type="inferred from homology"/>
<gene>
    <name type="primary">get3</name>
    <name type="ORF">SS1G_04838</name>
</gene>
<protein>
    <recommendedName>
        <fullName evidence="1">ATPase get3</fullName>
        <ecNumber evidence="1">3.6.-.-</ecNumber>
    </recommendedName>
    <alternativeName>
        <fullName evidence="1">Arsenical pump-driving ATPase</fullName>
    </alternativeName>
    <alternativeName>
        <fullName evidence="1">Arsenite-stimulated ATPase</fullName>
    </alternativeName>
    <alternativeName>
        <fullName evidence="1">Golgi to ER traffic protein 3</fullName>
    </alternativeName>
    <alternativeName>
        <fullName evidence="1">Guided entry of tail-anchored proteins 3</fullName>
    </alternativeName>
</protein>
<dbReference type="EC" id="3.6.-.-" evidence="1"/>
<dbReference type="EMBL" id="CH476626">
    <property type="protein sequence ID" value="EDO02362.1"/>
    <property type="molecule type" value="Genomic_DNA"/>
</dbReference>
<dbReference type="RefSeq" id="XP_001593411.1">
    <property type="nucleotide sequence ID" value="XM_001593361.1"/>
</dbReference>
<dbReference type="SMR" id="A7EHP6"/>
<dbReference type="FunCoup" id="A7EHP6">
    <property type="interactions" value="928"/>
</dbReference>
<dbReference type="STRING" id="665079.A7EHP6"/>
<dbReference type="EnsemblFungi" id="EDO02362">
    <property type="protein sequence ID" value="EDO02362"/>
    <property type="gene ID" value="SS1G_04838"/>
</dbReference>
<dbReference type="GeneID" id="5489615"/>
<dbReference type="KEGG" id="ssl:SS1G_04838"/>
<dbReference type="VEuPathDB" id="FungiDB:sscle_08g062150"/>
<dbReference type="eggNOG" id="KOG2825">
    <property type="taxonomic scope" value="Eukaryota"/>
</dbReference>
<dbReference type="HOGENOM" id="CLU_040761_0_0_1"/>
<dbReference type="InParanoid" id="A7EHP6"/>
<dbReference type="OMA" id="MDAPYEF"/>
<dbReference type="OrthoDB" id="1770at2759"/>
<dbReference type="Proteomes" id="UP000001312">
    <property type="component" value="Unassembled WGS sequence"/>
</dbReference>
<dbReference type="GO" id="GO:0043529">
    <property type="term" value="C:GET complex"/>
    <property type="evidence" value="ECO:0000318"/>
    <property type="project" value="GO_Central"/>
</dbReference>
<dbReference type="GO" id="GO:0005524">
    <property type="term" value="F:ATP binding"/>
    <property type="evidence" value="ECO:0007669"/>
    <property type="project" value="UniProtKB-UniRule"/>
</dbReference>
<dbReference type="GO" id="GO:0016887">
    <property type="term" value="F:ATP hydrolysis activity"/>
    <property type="evidence" value="ECO:0000318"/>
    <property type="project" value="GO_Central"/>
</dbReference>
<dbReference type="GO" id="GO:0005085">
    <property type="term" value="F:guanyl-nucleotide exchange factor activity"/>
    <property type="evidence" value="ECO:0007669"/>
    <property type="project" value="EnsemblFungi"/>
</dbReference>
<dbReference type="GO" id="GO:0042802">
    <property type="term" value="F:identical protein binding"/>
    <property type="evidence" value="ECO:0007669"/>
    <property type="project" value="EnsemblFungi"/>
</dbReference>
<dbReference type="GO" id="GO:0046872">
    <property type="term" value="F:metal ion binding"/>
    <property type="evidence" value="ECO:0007669"/>
    <property type="project" value="UniProtKB-KW"/>
</dbReference>
<dbReference type="GO" id="GO:0044183">
    <property type="term" value="F:protein folding chaperone"/>
    <property type="evidence" value="ECO:0007669"/>
    <property type="project" value="EnsemblFungi"/>
</dbReference>
<dbReference type="GO" id="GO:0051082">
    <property type="term" value="F:unfolded protein binding"/>
    <property type="evidence" value="ECO:0007669"/>
    <property type="project" value="EnsemblFungi"/>
</dbReference>
<dbReference type="GO" id="GO:0034599">
    <property type="term" value="P:cellular response to oxidative stress"/>
    <property type="evidence" value="ECO:0007669"/>
    <property type="project" value="EnsemblFungi"/>
</dbReference>
<dbReference type="GO" id="GO:0000750">
    <property type="term" value="P:pheromone-dependent signal transduction involved in conjugation with cellular fusion"/>
    <property type="evidence" value="ECO:0007669"/>
    <property type="project" value="EnsemblFungi"/>
</dbReference>
<dbReference type="GO" id="GO:0006620">
    <property type="term" value="P:post-translational protein targeting to endoplasmic reticulum membrane"/>
    <property type="evidence" value="ECO:0007669"/>
    <property type="project" value="EnsemblFungi"/>
</dbReference>
<dbReference type="GO" id="GO:0009408">
    <property type="term" value="P:response to heat"/>
    <property type="evidence" value="ECO:0007669"/>
    <property type="project" value="EnsemblFungi"/>
</dbReference>
<dbReference type="GO" id="GO:0010038">
    <property type="term" value="P:response to metal ion"/>
    <property type="evidence" value="ECO:0007669"/>
    <property type="project" value="EnsemblFungi"/>
</dbReference>
<dbReference type="GO" id="GO:0006890">
    <property type="term" value="P:retrograde vesicle-mediated transport, Golgi to endoplasmic reticulum"/>
    <property type="evidence" value="ECO:0007669"/>
    <property type="project" value="EnsemblFungi"/>
</dbReference>
<dbReference type="GO" id="GO:0071816">
    <property type="term" value="P:tail-anchored membrane protein insertion into ER membrane"/>
    <property type="evidence" value="ECO:0000318"/>
    <property type="project" value="GO_Central"/>
</dbReference>
<dbReference type="CDD" id="cd02035">
    <property type="entry name" value="ArsA"/>
    <property type="match status" value="1"/>
</dbReference>
<dbReference type="FunFam" id="3.40.50.300:FF:000235">
    <property type="entry name" value="ATPase ASNA1"/>
    <property type="match status" value="1"/>
</dbReference>
<dbReference type="Gene3D" id="3.40.50.300">
    <property type="entry name" value="P-loop containing nucleotide triphosphate hydrolases"/>
    <property type="match status" value="1"/>
</dbReference>
<dbReference type="HAMAP" id="MF_03112">
    <property type="entry name" value="Asna1_Get3"/>
    <property type="match status" value="1"/>
</dbReference>
<dbReference type="InterPro" id="IPR025723">
    <property type="entry name" value="Anion-transp_ATPase-like_dom"/>
</dbReference>
<dbReference type="InterPro" id="IPR016300">
    <property type="entry name" value="ATPase_ArsA/GET3"/>
</dbReference>
<dbReference type="InterPro" id="IPR027542">
    <property type="entry name" value="ATPase_ArsA/GET3_euk"/>
</dbReference>
<dbReference type="InterPro" id="IPR027417">
    <property type="entry name" value="P-loop_NTPase"/>
</dbReference>
<dbReference type="NCBIfam" id="TIGR00345">
    <property type="entry name" value="GET3_arsA_TRC40"/>
    <property type="match status" value="1"/>
</dbReference>
<dbReference type="PANTHER" id="PTHR10803">
    <property type="entry name" value="ARSENICAL PUMP-DRIVING ATPASE ARSENITE-TRANSLOCATING ATPASE"/>
    <property type="match status" value="1"/>
</dbReference>
<dbReference type="PANTHER" id="PTHR10803:SF3">
    <property type="entry name" value="ATPASE GET3"/>
    <property type="match status" value="1"/>
</dbReference>
<dbReference type="Pfam" id="PF02374">
    <property type="entry name" value="ArsA_ATPase"/>
    <property type="match status" value="1"/>
</dbReference>
<dbReference type="SUPFAM" id="SSF52540">
    <property type="entry name" value="P-loop containing nucleoside triphosphate hydrolases"/>
    <property type="match status" value="1"/>
</dbReference>
<accession>A7EHP6</accession>
<name>GET3_SCLS1</name>
<feature type="chain" id="PRO_0000388232" description="ATPase get3">
    <location>
        <begin position="1"/>
        <end position="340"/>
    </location>
</feature>
<feature type="active site" evidence="1">
    <location>
        <position position="63"/>
    </location>
</feature>
<feature type="binding site" evidence="1">
    <location>
        <begin position="34"/>
        <end position="41"/>
    </location>
    <ligand>
        <name>ATP</name>
        <dbReference type="ChEBI" id="CHEBI:30616"/>
    </ligand>
</feature>
<feature type="binding site" evidence="1">
    <location>
        <position position="242"/>
    </location>
    <ligand>
        <name>ATP</name>
        <dbReference type="ChEBI" id="CHEBI:30616"/>
    </ligand>
</feature>
<feature type="binding site" evidence="1">
    <location>
        <position position="269"/>
    </location>
    <ligand>
        <name>ATP</name>
        <dbReference type="ChEBI" id="CHEBI:30616"/>
    </ligand>
</feature>
<feature type="binding site" evidence="1">
    <location>
        <position position="280"/>
    </location>
    <ligand>
        <name>Zn(2+)</name>
        <dbReference type="ChEBI" id="CHEBI:29105"/>
        <note>ligand shared between dimeric partners</note>
    </ligand>
</feature>
<feature type="binding site" evidence="1">
    <location>
        <position position="283"/>
    </location>
    <ligand>
        <name>Zn(2+)</name>
        <dbReference type="ChEBI" id="CHEBI:29105"/>
        <note>ligand shared between dimeric partners</note>
    </ligand>
</feature>
<organism>
    <name type="scientific">Sclerotinia sclerotiorum (strain ATCC 18683 / 1980 / Ss-1)</name>
    <name type="common">White mold</name>
    <name type="synonym">Whetzelinia sclerotiorum</name>
    <dbReference type="NCBI Taxonomy" id="665079"/>
    <lineage>
        <taxon>Eukaryota</taxon>
        <taxon>Fungi</taxon>
        <taxon>Dikarya</taxon>
        <taxon>Ascomycota</taxon>
        <taxon>Pezizomycotina</taxon>
        <taxon>Leotiomycetes</taxon>
        <taxon>Helotiales</taxon>
        <taxon>Sclerotiniaceae</taxon>
        <taxon>Sclerotinia</taxon>
    </lineage>
</organism>
<reference key="1">
    <citation type="journal article" date="2011" name="PLoS Genet.">
        <title>Genomic analysis of the necrotrophic fungal pathogens Sclerotinia sclerotiorum and Botrytis cinerea.</title>
        <authorList>
            <person name="Amselem J."/>
            <person name="Cuomo C.A."/>
            <person name="van Kan J.A.L."/>
            <person name="Viaud M."/>
            <person name="Benito E.P."/>
            <person name="Couloux A."/>
            <person name="Coutinho P.M."/>
            <person name="de Vries R.P."/>
            <person name="Dyer P.S."/>
            <person name="Fillinger S."/>
            <person name="Fournier E."/>
            <person name="Gout L."/>
            <person name="Hahn M."/>
            <person name="Kohn L."/>
            <person name="Lapalu N."/>
            <person name="Plummer K.M."/>
            <person name="Pradier J.-M."/>
            <person name="Quevillon E."/>
            <person name="Sharon A."/>
            <person name="Simon A."/>
            <person name="ten Have A."/>
            <person name="Tudzynski B."/>
            <person name="Tudzynski P."/>
            <person name="Wincker P."/>
            <person name="Andrew M."/>
            <person name="Anthouard V."/>
            <person name="Beever R.E."/>
            <person name="Beffa R."/>
            <person name="Benoit I."/>
            <person name="Bouzid O."/>
            <person name="Brault B."/>
            <person name="Chen Z."/>
            <person name="Choquer M."/>
            <person name="Collemare J."/>
            <person name="Cotton P."/>
            <person name="Danchin E.G."/>
            <person name="Da Silva C."/>
            <person name="Gautier A."/>
            <person name="Giraud C."/>
            <person name="Giraud T."/>
            <person name="Gonzalez C."/>
            <person name="Grossetete S."/>
            <person name="Gueldener U."/>
            <person name="Henrissat B."/>
            <person name="Howlett B.J."/>
            <person name="Kodira C."/>
            <person name="Kretschmer M."/>
            <person name="Lappartient A."/>
            <person name="Leroch M."/>
            <person name="Levis C."/>
            <person name="Mauceli E."/>
            <person name="Neuveglise C."/>
            <person name="Oeser B."/>
            <person name="Pearson M."/>
            <person name="Poulain J."/>
            <person name="Poussereau N."/>
            <person name="Quesneville H."/>
            <person name="Rascle C."/>
            <person name="Schumacher J."/>
            <person name="Segurens B."/>
            <person name="Sexton A."/>
            <person name="Silva E."/>
            <person name="Sirven C."/>
            <person name="Soanes D.M."/>
            <person name="Talbot N.J."/>
            <person name="Templeton M."/>
            <person name="Yandava C."/>
            <person name="Yarden O."/>
            <person name="Zeng Q."/>
            <person name="Rollins J.A."/>
            <person name="Lebrun M.-H."/>
            <person name="Dickman M."/>
        </authorList>
    </citation>
    <scope>NUCLEOTIDE SEQUENCE [LARGE SCALE GENOMIC DNA]</scope>
    <source>
        <strain>ATCC 18683 / 1980 / Ss-1</strain>
    </source>
</reference>